<proteinExistence type="inferred from homology"/>
<gene>
    <name evidence="1" type="primary">ilvD2</name>
    <name type="ordered locus">ACIAD3636</name>
</gene>
<keyword id="KW-0001">2Fe-2S</keyword>
<keyword id="KW-0028">Amino-acid biosynthesis</keyword>
<keyword id="KW-0100">Branched-chain amino acid biosynthesis</keyword>
<keyword id="KW-0408">Iron</keyword>
<keyword id="KW-0411">Iron-sulfur</keyword>
<keyword id="KW-0456">Lyase</keyword>
<keyword id="KW-0460">Magnesium</keyword>
<keyword id="KW-0479">Metal-binding</keyword>
<protein>
    <recommendedName>
        <fullName evidence="1">Dihydroxy-acid dehydratase 2</fullName>
        <shortName evidence="1">DAD 2</shortName>
        <ecNumber evidence="1">4.2.1.9</ecNumber>
    </recommendedName>
</protein>
<accession>Q6F6Q0</accession>
<dbReference type="EC" id="4.2.1.9" evidence="1"/>
<dbReference type="EMBL" id="CR543861">
    <property type="protein sequence ID" value="CAG70267.1"/>
    <property type="molecule type" value="Genomic_DNA"/>
</dbReference>
<dbReference type="SMR" id="Q6F6Q0"/>
<dbReference type="STRING" id="202950.GCA_001485005_01590"/>
<dbReference type="GeneID" id="45235796"/>
<dbReference type="KEGG" id="aci:ACIAD3636"/>
<dbReference type="eggNOG" id="COG0129">
    <property type="taxonomic scope" value="Bacteria"/>
</dbReference>
<dbReference type="HOGENOM" id="CLU_014271_4_2_6"/>
<dbReference type="OrthoDB" id="9807077at2"/>
<dbReference type="BioCyc" id="ASP62977:ACIAD_RS16430-MONOMER"/>
<dbReference type="UniPathway" id="UPA00047">
    <property type="reaction ID" value="UER00057"/>
</dbReference>
<dbReference type="UniPathway" id="UPA00049">
    <property type="reaction ID" value="UER00061"/>
</dbReference>
<dbReference type="Proteomes" id="UP000000430">
    <property type="component" value="Chromosome"/>
</dbReference>
<dbReference type="GO" id="GO:0051537">
    <property type="term" value="F:2 iron, 2 sulfur cluster binding"/>
    <property type="evidence" value="ECO:0007669"/>
    <property type="project" value="UniProtKB-UniRule"/>
</dbReference>
<dbReference type="GO" id="GO:0004160">
    <property type="term" value="F:dihydroxy-acid dehydratase activity"/>
    <property type="evidence" value="ECO:0007669"/>
    <property type="project" value="UniProtKB-UniRule"/>
</dbReference>
<dbReference type="GO" id="GO:0000287">
    <property type="term" value="F:magnesium ion binding"/>
    <property type="evidence" value="ECO:0007669"/>
    <property type="project" value="UniProtKB-UniRule"/>
</dbReference>
<dbReference type="GO" id="GO:0009097">
    <property type="term" value="P:isoleucine biosynthetic process"/>
    <property type="evidence" value="ECO:0007669"/>
    <property type="project" value="UniProtKB-UniRule"/>
</dbReference>
<dbReference type="GO" id="GO:0009099">
    <property type="term" value="P:L-valine biosynthetic process"/>
    <property type="evidence" value="ECO:0007669"/>
    <property type="project" value="UniProtKB-UniRule"/>
</dbReference>
<dbReference type="FunFam" id="3.50.30.80:FF:000001">
    <property type="entry name" value="Dihydroxy-acid dehydratase"/>
    <property type="match status" value="1"/>
</dbReference>
<dbReference type="Gene3D" id="3.50.30.80">
    <property type="entry name" value="IlvD/EDD C-terminal domain-like"/>
    <property type="match status" value="1"/>
</dbReference>
<dbReference type="HAMAP" id="MF_00012">
    <property type="entry name" value="IlvD"/>
    <property type="match status" value="1"/>
</dbReference>
<dbReference type="InterPro" id="IPR050165">
    <property type="entry name" value="DHAD_IlvD/Edd"/>
</dbReference>
<dbReference type="InterPro" id="IPR042096">
    <property type="entry name" value="Dihydro-acid_dehy_C"/>
</dbReference>
<dbReference type="InterPro" id="IPR004404">
    <property type="entry name" value="DihydroxyA_deHydtase"/>
</dbReference>
<dbReference type="InterPro" id="IPR020558">
    <property type="entry name" value="DiOHA_6PGluconate_deHydtase_CS"/>
</dbReference>
<dbReference type="InterPro" id="IPR056740">
    <property type="entry name" value="ILV_EDD_C"/>
</dbReference>
<dbReference type="InterPro" id="IPR000581">
    <property type="entry name" value="ILV_EDD_N"/>
</dbReference>
<dbReference type="InterPro" id="IPR037237">
    <property type="entry name" value="IlvD/EDD_N"/>
</dbReference>
<dbReference type="NCBIfam" id="TIGR00110">
    <property type="entry name" value="ilvD"/>
    <property type="match status" value="1"/>
</dbReference>
<dbReference type="NCBIfam" id="NF002068">
    <property type="entry name" value="PRK00911.1"/>
    <property type="match status" value="1"/>
</dbReference>
<dbReference type="PANTHER" id="PTHR21000">
    <property type="entry name" value="DIHYDROXY-ACID DEHYDRATASE DAD"/>
    <property type="match status" value="1"/>
</dbReference>
<dbReference type="PANTHER" id="PTHR21000:SF5">
    <property type="entry name" value="DIHYDROXY-ACID DEHYDRATASE, MITOCHONDRIAL"/>
    <property type="match status" value="1"/>
</dbReference>
<dbReference type="Pfam" id="PF24877">
    <property type="entry name" value="ILV_EDD_C"/>
    <property type="match status" value="1"/>
</dbReference>
<dbReference type="Pfam" id="PF00920">
    <property type="entry name" value="ILVD_EDD_N"/>
    <property type="match status" value="1"/>
</dbReference>
<dbReference type="SUPFAM" id="SSF143975">
    <property type="entry name" value="IlvD/EDD N-terminal domain-like"/>
    <property type="match status" value="1"/>
</dbReference>
<dbReference type="SUPFAM" id="SSF52016">
    <property type="entry name" value="LeuD/IlvD-like"/>
    <property type="match status" value="1"/>
</dbReference>
<dbReference type="PROSITE" id="PS00886">
    <property type="entry name" value="ILVD_EDD_1"/>
    <property type="match status" value="1"/>
</dbReference>
<dbReference type="PROSITE" id="PS00887">
    <property type="entry name" value="ILVD_EDD_2"/>
    <property type="match status" value="1"/>
</dbReference>
<organism>
    <name type="scientific">Acinetobacter baylyi (strain ATCC 33305 / BD413 / ADP1)</name>
    <dbReference type="NCBI Taxonomy" id="62977"/>
    <lineage>
        <taxon>Bacteria</taxon>
        <taxon>Pseudomonadati</taxon>
        <taxon>Pseudomonadota</taxon>
        <taxon>Gammaproteobacteria</taxon>
        <taxon>Moraxellales</taxon>
        <taxon>Moraxellaceae</taxon>
        <taxon>Acinetobacter</taxon>
    </lineage>
</organism>
<name>ILVD2_ACIAD</name>
<reference key="1">
    <citation type="journal article" date="2004" name="Nucleic Acids Res.">
        <title>Unique features revealed by the genome sequence of Acinetobacter sp. ADP1, a versatile and naturally transformation competent bacterium.</title>
        <authorList>
            <person name="Barbe V."/>
            <person name="Vallenet D."/>
            <person name="Fonknechten N."/>
            <person name="Kreimeyer A."/>
            <person name="Oztas S."/>
            <person name="Labarre L."/>
            <person name="Cruveiller S."/>
            <person name="Robert C."/>
            <person name="Duprat S."/>
            <person name="Wincker P."/>
            <person name="Ornston L.N."/>
            <person name="Weissenbach J."/>
            <person name="Marliere P."/>
            <person name="Cohen G.N."/>
            <person name="Medigue C."/>
        </authorList>
    </citation>
    <scope>NUCLEOTIDE SEQUENCE [LARGE SCALE GENOMIC DNA]</scope>
    <source>
        <strain>ATCC 33305 / BD413 / ADP1</strain>
    </source>
</reference>
<comment type="function">
    <text evidence="1">Functions in the biosynthesis of branched-chain amino acids. Catalyzes the dehydration of (2R,3R)-2,3-dihydroxy-3-methylpentanoate (2,3-dihydroxy-3-methylvalerate) into 2-oxo-3-methylpentanoate (2-oxo-3-methylvalerate) and of (2R)-2,3-dihydroxy-3-methylbutanoate (2,3-dihydroxyisovalerate) into 2-oxo-3-methylbutanoate (2-oxoisovalerate), the penultimate precursor to L-isoleucine and L-valine, respectively.</text>
</comment>
<comment type="catalytic activity">
    <reaction evidence="1">
        <text>(2R)-2,3-dihydroxy-3-methylbutanoate = 3-methyl-2-oxobutanoate + H2O</text>
        <dbReference type="Rhea" id="RHEA:24809"/>
        <dbReference type="ChEBI" id="CHEBI:11851"/>
        <dbReference type="ChEBI" id="CHEBI:15377"/>
        <dbReference type="ChEBI" id="CHEBI:49072"/>
        <dbReference type="EC" id="4.2.1.9"/>
    </reaction>
    <physiologicalReaction direction="left-to-right" evidence="1">
        <dbReference type="Rhea" id="RHEA:24810"/>
    </physiologicalReaction>
</comment>
<comment type="catalytic activity">
    <reaction evidence="1">
        <text>(2R,3R)-2,3-dihydroxy-3-methylpentanoate = (S)-3-methyl-2-oxopentanoate + H2O</text>
        <dbReference type="Rhea" id="RHEA:27694"/>
        <dbReference type="ChEBI" id="CHEBI:15377"/>
        <dbReference type="ChEBI" id="CHEBI:35146"/>
        <dbReference type="ChEBI" id="CHEBI:49258"/>
        <dbReference type="EC" id="4.2.1.9"/>
    </reaction>
    <physiologicalReaction direction="left-to-right" evidence="1">
        <dbReference type="Rhea" id="RHEA:27695"/>
    </physiologicalReaction>
</comment>
<comment type="cofactor">
    <cofactor evidence="1">
        <name>[2Fe-2S] cluster</name>
        <dbReference type="ChEBI" id="CHEBI:190135"/>
    </cofactor>
    <text evidence="1">Binds 1 [2Fe-2S] cluster per subunit. This cluster acts as a Lewis acid cofactor.</text>
</comment>
<comment type="cofactor">
    <cofactor evidence="1">
        <name>Mg(2+)</name>
        <dbReference type="ChEBI" id="CHEBI:18420"/>
    </cofactor>
</comment>
<comment type="pathway">
    <text evidence="1">Amino-acid biosynthesis; L-isoleucine biosynthesis; L-isoleucine from 2-oxobutanoate: step 3/4.</text>
</comment>
<comment type="pathway">
    <text evidence="1">Amino-acid biosynthesis; L-valine biosynthesis; L-valine from pyruvate: step 3/4.</text>
</comment>
<comment type="subunit">
    <text evidence="1">Homodimer.</text>
</comment>
<comment type="similarity">
    <text evidence="1">Belongs to the IlvD/Edd family.</text>
</comment>
<sequence>MSKDNIRQYSAPVYDGIENAPARSMMRAVGFQDKDFNRPFIGIASTWANVTPCNMHIDGLAREAEHGVNQASGKGIIFNTITISDGISNGTEGMKYSLVSREIIADSIEAVIGCQGYDGVIAIGGCDKNMPGCIMGLARLNRPGLFIYGGTIQPGEGHTDMISVFEAVGQYAKGEINAIQVKQIEEVALPGPGSCGGMYTANTMASAIEALGMSLPGSSAQDAISEEKRQDCHRAGEAVMNLLRLDIRPRDIMTKAAFENAIKVVIALGGSTNAVLHLIAMAHTAEVKLDLDDFVRIGQETPVVADLRPSGKYLMSELIKIGGIQPLMKRMLERGMLDGSCLTVTGKTLAENLAEVEDYPADQQIILPFEQPVKKDSHLVILKGNLSPTGAVAKITGKEGLYFEGPARVFEGEEGAMRGILDGEVQEGEVVVIRGEGPKGGPGMREMLKPTSAIIGKGLGQSVALITDGRFSGGSHGFVIGHVTPEAYEGGPIGLVENGDKISINAETREITLHISNEEMSLRRAKWQKPEPKYKSGALAKFAKLAAGADKGAVTDLNLDV</sequence>
<feature type="chain" id="PRO_0000225363" description="Dihydroxy-acid dehydratase 2">
    <location>
        <begin position="1"/>
        <end position="561"/>
    </location>
</feature>
<feature type="active site" description="Proton acceptor" evidence="1">
    <location>
        <position position="472"/>
    </location>
</feature>
<feature type="binding site" evidence="1">
    <location>
        <position position="53"/>
    </location>
    <ligand>
        <name>[2Fe-2S] cluster</name>
        <dbReference type="ChEBI" id="CHEBI:190135"/>
    </ligand>
</feature>
<feature type="binding site" evidence="1">
    <location>
        <position position="85"/>
    </location>
    <ligand>
        <name>Mg(2+)</name>
        <dbReference type="ChEBI" id="CHEBI:18420"/>
    </ligand>
</feature>
<feature type="binding site" evidence="1">
    <location>
        <position position="126"/>
    </location>
    <ligand>
        <name>[2Fe-2S] cluster</name>
        <dbReference type="ChEBI" id="CHEBI:190135"/>
    </ligand>
</feature>
<feature type="binding site" evidence="1">
    <location>
        <position position="127"/>
    </location>
    <ligand>
        <name>Mg(2+)</name>
        <dbReference type="ChEBI" id="CHEBI:18420"/>
    </ligand>
</feature>
<feature type="binding site" description="via carbamate group" evidence="1">
    <location>
        <position position="128"/>
    </location>
    <ligand>
        <name>Mg(2+)</name>
        <dbReference type="ChEBI" id="CHEBI:18420"/>
    </ligand>
</feature>
<feature type="binding site" evidence="1">
    <location>
        <position position="195"/>
    </location>
    <ligand>
        <name>[2Fe-2S] cluster</name>
        <dbReference type="ChEBI" id="CHEBI:190135"/>
    </ligand>
</feature>
<feature type="binding site" evidence="1">
    <location>
        <position position="446"/>
    </location>
    <ligand>
        <name>Mg(2+)</name>
        <dbReference type="ChEBI" id="CHEBI:18420"/>
    </ligand>
</feature>
<feature type="modified residue" description="N6-carboxylysine" evidence="1">
    <location>
        <position position="128"/>
    </location>
</feature>
<evidence type="ECO:0000255" key="1">
    <source>
        <dbReference type="HAMAP-Rule" id="MF_00012"/>
    </source>
</evidence>